<accession>Q6ELV2</accession>
<gene>
    <name type="primary">MT-CYB</name>
    <name type="synonym">COB</name>
    <name type="synonym">CYTB</name>
    <name type="synonym">MTCYB</name>
</gene>
<feature type="chain" id="PRO_0000061100" description="Cytochrome b">
    <location>
        <begin position="1"/>
        <end position="379"/>
    </location>
</feature>
<feature type="transmembrane region" description="Helical" evidence="2">
    <location>
        <begin position="33"/>
        <end position="53"/>
    </location>
</feature>
<feature type="transmembrane region" description="Helical" evidence="2">
    <location>
        <begin position="77"/>
        <end position="98"/>
    </location>
</feature>
<feature type="transmembrane region" description="Helical" evidence="2">
    <location>
        <begin position="113"/>
        <end position="133"/>
    </location>
</feature>
<feature type="transmembrane region" description="Helical" evidence="2">
    <location>
        <begin position="178"/>
        <end position="198"/>
    </location>
</feature>
<feature type="transmembrane region" description="Helical" evidence="2">
    <location>
        <begin position="226"/>
        <end position="246"/>
    </location>
</feature>
<feature type="transmembrane region" description="Helical" evidence="2">
    <location>
        <begin position="288"/>
        <end position="308"/>
    </location>
</feature>
<feature type="transmembrane region" description="Helical" evidence="2">
    <location>
        <begin position="320"/>
        <end position="340"/>
    </location>
</feature>
<feature type="transmembrane region" description="Helical" evidence="2">
    <location>
        <begin position="347"/>
        <end position="367"/>
    </location>
</feature>
<feature type="binding site" description="axial binding residue" evidence="2">
    <location>
        <position position="83"/>
    </location>
    <ligand>
        <name>heme b</name>
        <dbReference type="ChEBI" id="CHEBI:60344"/>
        <label>b562</label>
    </ligand>
    <ligandPart>
        <name>Fe</name>
        <dbReference type="ChEBI" id="CHEBI:18248"/>
    </ligandPart>
</feature>
<feature type="binding site" description="axial binding residue" evidence="2">
    <location>
        <position position="97"/>
    </location>
    <ligand>
        <name>heme b</name>
        <dbReference type="ChEBI" id="CHEBI:60344"/>
        <label>b566</label>
    </ligand>
    <ligandPart>
        <name>Fe</name>
        <dbReference type="ChEBI" id="CHEBI:18248"/>
    </ligandPart>
</feature>
<feature type="binding site" description="axial binding residue" evidence="2">
    <location>
        <position position="182"/>
    </location>
    <ligand>
        <name>heme b</name>
        <dbReference type="ChEBI" id="CHEBI:60344"/>
        <label>b562</label>
    </ligand>
    <ligandPart>
        <name>Fe</name>
        <dbReference type="ChEBI" id="CHEBI:18248"/>
    </ligandPart>
</feature>
<feature type="binding site" description="axial binding residue" evidence="2">
    <location>
        <position position="196"/>
    </location>
    <ligand>
        <name>heme b</name>
        <dbReference type="ChEBI" id="CHEBI:60344"/>
        <label>b566</label>
    </ligand>
    <ligandPart>
        <name>Fe</name>
        <dbReference type="ChEBI" id="CHEBI:18248"/>
    </ligandPart>
</feature>
<feature type="binding site" evidence="2">
    <location>
        <position position="201"/>
    </location>
    <ligand>
        <name>a ubiquinone</name>
        <dbReference type="ChEBI" id="CHEBI:16389"/>
    </ligand>
</feature>
<keyword id="KW-0249">Electron transport</keyword>
<keyword id="KW-0349">Heme</keyword>
<keyword id="KW-0408">Iron</keyword>
<keyword id="KW-0472">Membrane</keyword>
<keyword id="KW-0479">Metal-binding</keyword>
<keyword id="KW-0496">Mitochondrion</keyword>
<keyword id="KW-0999">Mitochondrion inner membrane</keyword>
<keyword id="KW-0679">Respiratory chain</keyword>
<keyword id="KW-0812">Transmembrane</keyword>
<keyword id="KW-1133">Transmembrane helix</keyword>
<keyword id="KW-0813">Transport</keyword>
<keyword id="KW-0830">Ubiquinone</keyword>
<reference key="1">
    <citation type="journal article" date="2004" name="Syst. Biol.">
        <title>A molecular supermatrix of the rabbits and hares (Leporidae) allows for the identification of five intercontinental exchanges during the Miocene.</title>
        <authorList>
            <person name="Matthee C.A."/>
            <person name="van Vuuren B.J."/>
            <person name="Bell D."/>
            <person name="Robinson T.J."/>
        </authorList>
    </citation>
    <scope>NUCLEOTIDE SEQUENCE [GENOMIC DNA]</scope>
</reference>
<comment type="function">
    <text evidence="2">Component of the ubiquinol-cytochrome c reductase complex (complex III or cytochrome b-c1 complex) that is part of the mitochondrial respiratory chain. The b-c1 complex mediates electron transfer from ubiquinol to cytochrome c. Contributes to the generation of a proton gradient across the mitochondrial membrane that is then used for ATP synthesis.</text>
</comment>
<comment type="cofactor">
    <cofactor evidence="2">
        <name>heme b</name>
        <dbReference type="ChEBI" id="CHEBI:60344"/>
    </cofactor>
    <text evidence="2">Binds 2 heme b groups non-covalently.</text>
</comment>
<comment type="subunit">
    <text evidence="2">The cytochrome bc1 complex contains 11 subunits: 3 respiratory subunits (MT-CYB, CYC1 and UQCRFS1), 2 core proteins (UQCRC1 and UQCRC2) and 6 low-molecular weight proteins (UQCRH/QCR6, UQCRB/QCR7, UQCRQ/QCR8, UQCR10/QCR9, UQCR11/QCR10 and a cleavage product of UQCRFS1). This cytochrome bc1 complex then forms a dimer.</text>
</comment>
<comment type="subcellular location">
    <subcellularLocation>
        <location evidence="2">Mitochondrion inner membrane</location>
        <topology evidence="2">Multi-pass membrane protein</topology>
    </subcellularLocation>
</comment>
<comment type="miscellaneous">
    <text evidence="1">Heme 1 (or BL or b562) is low-potential and absorbs at about 562 nm, and heme 2 (or BH or b566) is high-potential and absorbs at about 566 nm.</text>
</comment>
<comment type="similarity">
    <text evidence="3 4">Belongs to the cytochrome b family.</text>
</comment>
<comment type="caution">
    <text evidence="2">The full-length protein contains only eight transmembrane helices, not nine as predicted by bioinformatics tools.</text>
</comment>
<protein>
    <recommendedName>
        <fullName>Cytochrome b</fullName>
    </recommendedName>
    <alternativeName>
        <fullName>Complex III subunit 3</fullName>
    </alternativeName>
    <alternativeName>
        <fullName>Complex III subunit III</fullName>
    </alternativeName>
    <alternativeName>
        <fullName>Cytochrome b-c1 complex subunit 3</fullName>
    </alternativeName>
    <alternativeName>
        <fullName>Ubiquinol-cytochrome-c reductase complex cytochrome b subunit</fullName>
    </alternativeName>
</protein>
<organism>
    <name type="scientific">Lepus capensis</name>
    <name type="common">Brown hare</name>
    <dbReference type="NCBI Taxonomy" id="9981"/>
    <lineage>
        <taxon>Eukaryota</taxon>
        <taxon>Metazoa</taxon>
        <taxon>Chordata</taxon>
        <taxon>Craniata</taxon>
        <taxon>Vertebrata</taxon>
        <taxon>Euteleostomi</taxon>
        <taxon>Mammalia</taxon>
        <taxon>Eutheria</taxon>
        <taxon>Euarchontoglires</taxon>
        <taxon>Glires</taxon>
        <taxon>Lagomorpha</taxon>
        <taxon>Leporidae</taxon>
        <taxon>Lepus</taxon>
    </lineage>
</organism>
<sequence length="379" mass="42797">MTNIRKTHPLLKIVNHSLIDLPAPSNISAWWNFGSLLGLCLMIQILTGLFLAMHYTSDTATAFSSVTHICRDVNYGWLIRYLHANGASMFFICLYMHVGRGIYYGSYTYLETWNIGIILLFAVMATAFMGYVLPWGQMSFWGATVITNFLSAIPYIGTTLVEWIWGGFSVDKATLTRFFAFHFILPFIIAALVMIHLLFLHETGSNNPSGIPSDSDKIPFHPYYTIKDVLGFLILILLLTLLVLFSPDLLGDPDNYTPANPLNTPPHIKPEWYFLFAYAILRSIPNKLGGVLALVMSILILAIIPLLHMSKQRSMMFRPISQVLFWILVADLLTLTWIGGQPVEHPFITIGQVASILYFSIILIFMPLASLIENKILKW</sequence>
<name>CYB_LEPCA</name>
<evidence type="ECO:0000250" key="1"/>
<evidence type="ECO:0000250" key="2">
    <source>
        <dbReference type="UniProtKB" id="P00157"/>
    </source>
</evidence>
<evidence type="ECO:0000255" key="3">
    <source>
        <dbReference type="PROSITE-ProRule" id="PRU00967"/>
    </source>
</evidence>
<evidence type="ECO:0000255" key="4">
    <source>
        <dbReference type="PROSITE-ProRule" id="PRU00968"/>
    </source>
</evidence>
<proteinExistence type="inferred from homology"/>
<geneLocation type="mitochondrion"/>
<dbReference type="EMBL" id="AY292732">
    <property type="protein sequence ID" value="AAS54928.1"/>
    <property type="molecule type" value="Genomic_DNA"/>
</dbReference>
<dbReference type="SMR" id="Q6ELV2"/>
<dbReference type="GO" id="GO:0005743">
    <property type="term" value="C:mitochondrial inner membrane"/>
    <property type="evidence" value="ECO:0007669"/>
    <property type="project" value="UniProtKB-SubCell"/>
</dbReference>
<dbReference type="GO" id="GO:0045275">
    <property type="term" value="C:respiratory chain complex III"/>
    <property type="evidence" value="ECO:0007669"/>
    <property type="project" value="InterPro"/>
</dbReference>
<dbReference type="GO" id="GO:0046872">
    <property type="term" value="F:metal ion binding"/>
    <property type="evidence" value="ECO:0007669"/>
    <property type="project" value="UniProtKB-KW"/>
</dbReference>
<dbReference type="GO" id="GO:0008121">
    <property type="term" value="F:ubiquinol-cytochrome-c reductase activity"/>
    <property type="evidence" value="ECO:0007669"/>
    <property type="project" value="InterPro"/>
</dbReference>
<dbReference type="GO" id="GO:0006122">
    <property type="term" value="P:mitochondrial electron transport, ubiquinol to cytochrome c"/>
    <property type="evidence" value="ECO:0007669"/>
    <property type="project" value="TreeGrafter"/>
</dbReference>
<dbReference type="CDD" id="cd00290">
    <property type="entry name" value="cytochrome_b_C"/>
    <property type="match status" value="1"/>
</dbReference>
<dbReference type="CDD" id="cd00284">
    <property type="entry name" value="Cytochrome_b_N"/>
    <property type="match status" value="1"/>
</dbReference>
<dbReference type="FunFam" id="1.20.810.10:FF:000002">
    <property type="entry name" value="Cytochrome b"/>
    <property type="match status" value="1"/>
</dbReference>
<dbReference type="Gene3D" id="1.20.810.10">
    <property type="entry name" value="Cytochrome Bc1 Complex, Chain C"/>
    <property type="match status" value="1"/>
</dbReference>
<dbReference type="InterPro" id="IPR005798">
    <property type="entry name" value="Cyt_b/b6_C"/>
</dbReference>
<dbReference type="InterPro" id="IPR036150">
    <property type="entry name" value="Cyt_b/b6_C_sf"/>
</dbReference>
<dbReference type="InterPro" id="IPR005797">
    <property type="entry name" value="Cyt_b/b6_N"/>
</dbReference>
<dbReference type="InterPro" id="IPR027387">
    <property type="entry name" value="Cytb/b6-like_sf"/>
</dbReference>
<dbReference type="InterPro" id="IPR030689">
    <property type="entry name" value="Cytochrome_b"/>
</dbReference>
<dbReference type="InterPro" id="IPR048260">
    <property type="entry name" value="Cytochrome_b_C_euk/bac"/>
</dbReference>
<dbReference type="InterPro" id="IPR048259">
    <property type="entry name" value="Cytochrome_b_N_euk/bac"/>
</dbReference>
<dbReference type="InterPro" id="IPR016174">
    <property type="entry name" value="Di-haem_cyt_TM"/>
</dbReference>
<dbReference type="PANTHER" id="PTHR19271">
    <property type="entry name" value="CYTOCHROME B"/>
    <property type="match status" value="1"/>
</dbReference>
<dbReference type="PANTHER" id="PTHR19271:SF16">
    <property type="entry name" value="CYTOCHROME B"/>
    <property type="match status" value="1"/>
</dbReference>
<dbReference type="Pfam" id="PF00032">
    <property type="entry name" value="Cytochrom_B_C"/>
    <property type="match status" value="1"/>
</dbReference>
<dbReference type="Pfam" id="PF00033">
    <property type="entry name" value="Cytochrome_B"/>
    <property type="match status" value="1"/>
</dbReference>
<dbReference type="PIRSF" id="PIRSF038885">
    <property type="entry name" value="COB"/>
    <property type="match status" value="1"/>
</dbReference>
<dbReference type="SUPFAM" id="SSF81648">
    <property type="entry name" value="a domain/subunit of cytochrome bc1 complex (Ubiquinol-cytochrome c reductase)"/>
    <property type="match status" value="1"/>
</dbReference>
<dbReference type="SUPFAM" id="SSF81342">
    <property type="entry name" value="Transmembrane di-heme cytochromes"/>
    <property type="match status" value="1"/>
</dbReference>
<dbReference type="PROSITE" id="PS51003">
    <property type="entry name" value="CYTB_CTER"/>
    <property type="match status" value="1"/>
</dbReference>
<dbReference type="PROSITE" id="PS51002">
    <property type="entry name" value="CYTB_NTER"/>
    <property type="match status" value="1"/>
</dbReference>